<comment type="function">
    <text evidence="1">Transfers the 4'-phosphopantetheine moiety from coenzyme A to a Ser of acyl-carrier-protein.</text>
</comment>
<comment type="catalytic activity">
    <reaction evidence="1">
        <text>apo-[ACP] + CoA = holo-[ACP] + adenosine 3',5'-bisphosphate + H(+)</text>
        <dbReference type="Rhea" id="RHEA:12068"/>
        <dbReference type="Rhea" id="RHEA-COMP:9685"/>
        <dbReference type="Rhea" id="RHEA-COMP:9690"/>
        <dbReference type="ChEBI" id="CHEBI:15378"/>
        <dbReference type="ChEBI" id="CHEBI:29999"/>
        <dbReference type="ChEBI" id="CHEBI:57287"/>
        <dbReference type="ChEBI" id="CHEBI:58343"/>
        <dbReference type="ChEBI" id="CHEBI:64479"/>
        <dbReference type="EC" id="2.7.8.7"/>
    </reaction>
</comment>
<comment type="cofactor">
    <cofactor evidence="1">
        <name>Mg(2+)</name>
        <dbReference type="ChEBI" id="CHEBI:18420"/>
    </cofactor>
</comment>
<comment type="subcellular location">
    <subcellularLocation>
        <location evidence="1">Cytoplasm</location>
    </subcellularLocation>
</comment>
<comment type="similarity">
    <text evidence="1">Belongs to the P-Pant transferase superfamily. AcpS family.</text>
</comment>
<sequence length="127" mass="13865">MLVTGVDLIEIDRINQAVSRWGQRFARRVWTEAEWLRCRDSAQSLAARWAAKEAAAKALGVGLKGIGHPACAVAWREIEVANDTQGKPLLRLHGAAQQRANELGIRHWSVSLSHSGDQAIAFVVGMG</sequence>
<organism>
    <name type="scientific">Herpetosiphon aurantiacus (strain ATCC 23779 / DSM 785 / 114-95)</name>
    <dbReference type="NCBI Taxonomy" id="316274"/>
    <lineage>
        <taxon>Bacteria</taxon>
        <taxon>Bacillati</taxon>
        <taxon>Chloroflexota</taxon>
        <taxon>Chloroflexia</taxon>
        <taxon>Herpetosiphonales</taxon>
        <taxon>Herpetosiphonaceae</taxon>
        <taxon>Herpetosiphon</taxon>
    </lineage>
</organism>
<keyword id="KW-0963">Cytoplasm</keyword>
<keyword id="KW-0275">Fatty acid biosynthesis</keyword>
<keyword id="KW-0276">Fatty acid metabolism</keyword>
<keyword id="KW-0444">Lipid biosynthesis</keyword>
<keyword id="KW-0443">Lipid metabolism</keyword>
<keyword id="KW-0460">Magnesium</keyword>
<keyword id="KW-0479">Metal-binding</keyword>
<keyword id="KW-0808">Transferase</keyword>
<dbReference type="EC" id="2.7.8.7" evidence="1"/>
<dbReference type="EMBL" id="CP000875">
    <property type="protein sequence ID" value="ABX03961.1"/>
    <property type="molecule type" value="Genomic_DNA"/>
</dbReference>
<dbReference type="SMR" id="A9B2B6"/>
<dbReference type="FunCoup" id="A9B2B6">
    <property type="interactions" value="129"/>
</dbReference>
<dbReference type="STRING" id="316274.Haur_1313"/>
<dbReference type="KEGG" id="hau:Haur_1313"/>
<dbReference type="eggNOG" id="COG0736">
    <property type="taxonomic scope" value="Bacteria"/>
</dbReference>
<dbReference type="HOGENOM" id="CLU_089696_0_2_0"/>
<dbReference type="InParanoid" id="A9B2B6"/>
<dbReference type="Proteomes" id="UP000000787">
    <property type="component" value="Chromosome"/>
</dbReference>
<dbReference type="GO" id="GO:0005737">
    <property type="term" value="C:cytoplasm"/>
    <property type="evidence" value="ECO:0007669"/>
    <property type="project" value="UniProtKB-SubCell"/>
</dbReference>
<dbReference type="GO" id="GO:0008897">
    <property type="term" value="F:holo-[acyl-carrier-protein] synthase activity"/>
    <property type="evidence" value="ECO:0007669"/>
    <property type="project" value="UniProtKB-UniRule"/>
</dbReference>
<dbReference type="GO" id="GO:0000287">
    <property type="term" value="F:magnesium ion binding"/>
    <property type="evidence" value="ECO:0007669"/>
    <property type="project" value="UniProtKB-UniRule"/>
</dbReference>
<dbReference type="GO" id="GO:0006633">
    <property type="term" value="P:fatty acid biosynthetic process"/>
    <property type="evidence" value="ECO:0007669"/>
    <property type="project" value="UniProtKB-UniRule"/>
</dbReference>
<dbReference type="Gene3D" id="3.90.470.20">
    <property type="entry name" value="4'-phosphopantetheinyl transferase domain"/>
    <property type="match status" value="1"/>
</dbReference>
<dbReference type="HAMAP" id="MF_00101">
    <property type="entry name" value="AcpS"/>
    <property type="match status" value="1"/>
</dbReference>
<dbReference type="InterPro" id="IPR008278">
    <property type="entry name" value="4-PPantetheinyl_Trfase_dom"/>
</dbReference>
<dbReference type="InterPro" id="IPR037143">
    <property type="entry name" value="4-PPantetheinyl_Trfase_dom_sf"/>
</dbReference>
<dbReference type="InterPro" id="IPR002582">
    <property type="entry name" value="ACPS"/>
</dbReference>
<dbReference type="InterPro" id="IPR004568">
    <property type="entry name" value="Ppantetheine-prot_Trfase_dom"/>
</dbReference>
<dbReference type="NCBIfam" id="TIGR00516">
    <property type="entry name" value="acpS"/>
    <property type="match status" value="1"/>
</dbReference>
<dbReference type="NCBIfam" id="TIGR00556">
    <property type="entry name" value="pantethn_trn"/>
    <property type="match status" value="1"/>
</dbReference>
<dbReference type="Pfam" id="PF01648">
    <property type="entry name" value="ACPS"/>
    <property type="match status" value="1"/>
</dbReference>
<dbReference type="SUPFAM" id="SSF56214">
    <property type="entry name" value="4'-phosphopantetheinyl transferase"/>
    <property type="match status" value="1"/>
</dbReference>
<gene>
    <name evidence="1" type="primary">acpS</name>
    <name type="ordered locus">Haur_1313</name>
</gene>
<proteinExistence type="inferred from homology"/>
<accession>A9B2B6</accession>
<reference key="1">
    <citation type="journal article" date="2011" name="Stand. Genomic Sci.">
        <title>Complete genome sequence of the filamentous gliding predatory bacterium Herpetosiphon aurantiacus type strain (114-95(T)).</title>
        <authorList>
            <person name="Kiss H."/>
            <person name="Nett M."/>
            <person name="Domin N."/>
            <person name="Martin K."/>
            <person name="Maresca J.A."/>
            <person name="Copeland A."/>
            <person name="Lapidus A."/>
            <person name="Lucas S."/>
            <person name="Berry K.W."/>
            <person name="Glavina Del Rio T."/>
            <person name="Dalin E."/>
            <person name="Tice H."/>
            <person name="Pitluck S."/>
            <person name="Richardson P."/>
            <person name="Bruce D."/>
            <person name="Goodwin L."/>
            <person name="Han C."/>
            <person name="Detter J.C."/>
            <person name="Schmutz J."/>
            <person name="Brettin T."/>
            <person name="Land M."/>
            <person name="Hauser L."/>
            <person name="Kyrpides N.C."/>
            <person name="Ivanova N."/>
            <person name="Goeker M."/>
            <person name="Woyke T."/>
            <person name="Klenk H.P."/>
            <person name="Bryant D.A."/>
        </authorList>
    </citation>
    <scope>NUCLEOTIDE SEQUENCE [LARGE SCALE GENOMIC DNA]</scope>
    <source>
        <strain>ATCC 23779 / DSM 785 / 114-95</strain>
    </source>
</reference>
<name>ACPS_HERA2</name>
<feature type="chain" id="PRO_1000093882" description="Holo-[acyl-carrier-protein] synthase">
    <location>
        <begin position="1"/>
        <end position="127"/>
    </location>
</feature>
<feature type="binding site" evidence="1">
    <location>
        <position position="7"/>
    </location>
    <ligand>
        <name>Mg(2+)</name>
        <dbReference type="ChEBI" id="CHEBI:18420"/>
    </ligand>
</feature>
<feature type="binding site" evidence="1">
    <location>
        <position position="53"/>
    </location>
    <ligand>
        <name>Mg(2+)</name>
        <dbReference type="ChEBI" id="CHEBI:18420"/>
    </ligand>
</feature>
<protein>
    <recommendedName>
        <fullName evidence="1">Holo-[acyl-carrier-protein] synthase</fullName>
        <shortName evidence="1">Holo-ACP synthase</shortName>
        <ecNumber evidence="1">2.7.8.7</ecNumber>
    </recommendedName>
    <alternativeName>
        <fullName evidence="1">4'-phosphopantetheinyl transferase AcpS</fullName>
    </alternativeName>
</protein>
<evidence type="ECO:0000255" key="1">
    <source>
        <dbReference type="HAMAP-Rule" id="MF_00101"/>
    </source>
</evidence>